<keyword id="KW-0269">Exonuclease</keyword>
<keyword id="KW-0378">Hydrolase</keyword>
<keyword id="KW-0460">Magnesium</keyword>
<keyword id="KW-0479">Metal-binding</keyword>
<keyword id="KW-0540">Nuclease</keyword>
<keyword id="KW-0547">Nucleotide-binding</keyword>
<keyword id="KW-0539">Nucleus</keyword>
<keyword id="KW-0597">Phosphoprotein</keyword>
<keyword id="KW-1185">Reference proteome</keyword>
<keyword id="KW-0694">RNA-binding</keyword>
<dbReference type="EC" id="3.6.1.-" evidence="1"/>
<dbReference type="EC" id="3.1.13.-" evidence="1"/>
<dbReference type="EMBL" id="BX883045">
    <property type="protein sequence ID" value="CAE83969.1"/>
    <property type="molecule type" value="Genomic_DNA"/>
</dbReference>
<dbReference type="EMBL" id="BC082083">
    <property type="protein sequence ID" value="AAH82083.1"/>
    <property type="molecule type" value="mRNA"/>
</dbReference>
<dbReference type="RefSeq" id="NP_997662.1">
    <property type="nucleotide sequence ID" value="NM_212497.2"/>
</dbReference>
<dbReference type="SMR" id="Q6MG77"/>
<dbReference type="FunCoup" id="Q6MG77">
    <property type="interactions" value="2032"/>
</dbReference>
<dbReference type="STRING" id="10116.ENSRNOP00000000483"/>
<dbReference type="iPTMnet" id="Q6MG77"/>
<dbReference type="PhosphoSitePlus" id="Q6MG77"/>
<dbReference type="PaxDb" id="10116-ENSRNOP00000000483"/>
<dbReference type="Ensembl" id="ENSRNOT00000000483.5">
    <property type="protein sequence ID" value="ENSRNOP00000000483.2"/>
    <property type="gene ID" value="ENSRNOG00000000422.5"/>
</dbReference>
<dbReference type="GeneID" id="361799"/>
<dbReference type="KEGG" id="rno:361799"/>
<dbReference type="UCSC" id="RGD:1303267">
    <property type="organism name" value="rat"/>
</dbReference>
<dbReference type="AGR" id="RGD:1303267"/>
<dbReference type="CTD" id="1797"/>
<dbReference type="RGD" id="1303267">
    <property type="gene designation" value="Dxo"/>
</dbReference>
<dbReference type="eggNOG" id="KOG1982">
    <property type="taxonomic scope" value="Eukaryota"/>
</dbReference>
<dbReference type="GeneTree" id="ENSGT00390000006425"/>
<dbReference type="HOGENOM" id="CLU_024877_1_2_1"/>
<dbReference type="InParanoid" id="Q6MG77"/>
<dbReference type="OMA" id="VVTWRGH"/>
<dbReference type="OrthoDB" id="5853397at2759"/>
<dbReference type="PhylomeDB" id="Q6MG77"/>
<dbReference type="TreeFam" id="TF322812"/>
<dbReference type="PRO" id="PR:Q6MG77"/>
<dbReference type="Proteomes" id="UP000002494">
    <property type="component" value="Chromosome 20"/>
</dbReference>
<dbReference type="Bgee" id="ENSRNOG00000000422">
    <property type="expression patterns" value="Expressed in pancreas and 19 other cell types or tissues"/>
</dbReference>
<dbReference type="GO" id="GO:0005829">
    <property type="term" value="C:cytosol"/>
    <property type="evidence" value="ECO:0000318"/>
    <property type="project" value="GO_Central"/>
</dbReference>
<dbReference type="GO" id="GO:0005654">
    <property type="term" value="C:nucleoplasm"/>
    <property type="evidence" value="ECO:0007669"/>
    <property type="project" value="Ensembl"/>
</dbReference>
<dbReference type="GO" id="GO:0005634">
    <property type="term" value="C:nucleus"/>
    <property type="evidence" value="ECO:0000250"/>
    <property type="project" value="UniProtKB"/>
</dbReference>
<dbReference type="GO" id="GO:0005886">
    <property type="term" value="C:plasma membrane"/>
    <property type="evidence" value="ECO:0007669"/>
    <property type="project" value="Ensembl"/>
</dbReference>
<dbReference type="GO" id="GO:0008409">
    <property type="term" value="F:5'-3' exonuclease activity"/>
    <property type="evidence" value="ECO:0000250"/>
    <property type="project" value="UniProtKB"/>
</dbReference>
<dbReference type="GO" id="GO:0000287">
    <property type="term" value="F:magnesium ion binding"/>
    <property type="evidence" value="ECO:0000250"/>
    <property type="project" value="UniProtKB"/>
</dbReference>
<dbReference type="GO" id="GO:0034353">
    <property type="term" value="F:mRNA 5'-diphosphatase activity"/>
    <property type="evidence" value="ECO:0000250"/>
    <property type="project" value="UniProtKB"/>
</dbReference>
<dbReference type="GO" id="GO:0003729">
    <property type="term" value="F:mRNA binding"/>
    <property type="evidence" value="ECO:0000250"/>
    <property type="project" value="UniProtKB"/>
</dbReference>
<dbReference type="GO" id="GO:0000166">
    <property type="term" value="F:nucleotide binding"/>
    <property type="evidence" value="ECO:0007669"/>
    <property type="project" value="UniProtKB-KW"/>
</dbReference>
<dbReference type="GO" id="GO:0110152">
    <property type="term" value="F:RNA NAD+-cap (NAD+-forming) hydrolase activity"/>
    <property type="evidence" value="ECO:0000250"/>
    <property type="project" value="UniProtKB"/>
</dbReference>
<dbReference type="GO" id="GO:0006402">
    <property type="term" value="P:mRNA catabolic process"/>
    <property type="evidence" value="ECO:0000250"/>
    <property type="project" value="UniProtKB"/>
</dbReference>
<dbReference type="GO" id="GO:0110155">
    <property type="term" value="P:NAD-cap decapping"/>
    <property type="evidence" value="ECO:0000250"/>
    <property type="project" value="UniProtKB"/>
</dbReference>
<dbReference type="GO" id="GO:0071028">
    <property type="term" value="P:nuclear mRNA surveillance"/>
    <property type="evidence" value="ECO:0000250"/>
    <property type="project" value="UniProtKB"/>
</dbReference>
<dbReference type="GO" id="GO:0000956">
    <property type="term" value="P:nuclear-transcribed mRNA catabolic process"/>
    <property type="evidence" value="ECO:0000318"/>
    <property type="project" value="GO_Central"/>
</dbReference>
<dbReference type="GO" id="GO:0090304">
    <property type="term" value="P:nucleic acid metabolic process"/>
    <property type="evidence" value="ECO:0000250"/>
    <property type="project" value="UniProtKB"/>
</dbReference>
<dbReference type="GO" id="GO:0050779">
    <property type="term" value="P:RNA destabilization"/>
    <property type="evidence" value="ECO:0000250"/>
    <property type="project" value="UniProtKB"/>
</dbReference>
<dbReference type="InterPro" id="IPR013961">
    <property type="entry name" value="RAI1"/>
</dbReference>
<dbReference type="InterPro" id="IPR039039">
    <property type="entry name" value="RAI1-like_fam"/>
</dbReference>
<dbReference type="PANTHER" id="PTHR12395:SF9">
    <property type="entry name" value="DECAPPING AND EXORIBONUCLEASE PROTEIN"/>
    <property type="match status" value="1"/>
</dbReference>
<dbReference type="PANTHER" id="PTHR12395">
    <property type="entry name" value="DOM-3 RELATED"/>
    <property type="match status" value="1"/>
</dbReference>
<dbReference type="Pfam" id="PF08652">
    <property type="entry name" value="RAI1"/>
    <property type="match status" value="1"/>
</dbReference>
<comment type="function">
    <text evidence="1 2">Decapping enzyme for NAD-capped RNAs: specifically hydrolyzes the nicotinamide adenine dinucleotide (NAD) cap from a subset of RNAs by removing the entire NAD moiety from the 5'-end of an NAD-capped RNA. The NAD-cap is present at the 5'-end of some RNAs and snoRNAs. In contrast to the canonical 5'-end N7 methylguanosine (m7G) cap, the NAD cap promotes mRNA decay (By similarity). Preferentially acts on NAD-capped transcripts in response to environmental stress (By similarity). Also acts as a non-canonical decapping enzyme that removes the entire cap structure of m7G capped or incompletely capped RNAs and mediates their subsequent degradation. Specifically degrades pre-mRNAs with a defective 5'-end m7G cap and is part of a pre-mRNA capping quality control. Has decapping activity toward incomplete 5'-end m7G cap mRNAs such as unmethylated 5'-end-capped RNA (cap0), while it has no activity toward 2'-O-ribose methylated m7G cap (cap1). In contrast to canonical decapping enzymes DCP2 and NUDT16, which cleave the cap within the triphosphate linkage, the decapping activity releases the entire cap structure GpppN and a 5'-end monophosphate RNA. Also has 5'-3' exoribonuclease activities: The 5'-end monophosphate RNA is then degraded by the 5'-3' exoribonuclease activity, enabling this enzyme to decap and degrade incompletely capped mRNAs. Also possesses RNA 5'-pyrophosphohydrolase activity by hydrolyzing the 5'-end triphosphate to release pyrophosphates (By similarity). Exhibits decapping activity towards FAD-capped RNAs (By similarity). Exhibits decapping activity towards dpCoA-capped RNAs in vitro (By similarity).</text>
</comment>
<comment type="catalytic activity">
    <reaction evidence="1">
        <text>a 5'-end triphospho-ribonucleoside in mRNA + H2O = a 5'-end phospho-ribonucleoside in mRNA + diphosphate + H(+)</text>
        <dbReference type="Rhea" id="RHEA:78683"/>
        <dbReference type="Rhea" id="RHEA-COMP:15692"/>
        <dbReference type="Rhea" id="RHEA-COMP:17164"/>
        <dbReference type="ChEBI" id="CHEBI:15377"/>
        <dbReference type="ChEBI" id="CHEBI:15378"/>
        <dbReference type="ChEBI" id="CHEBI:33019"/>
        <dbReference type="ChEBI" id="CHEBI:138282"/>
        <dbReference type="ChEBI" id="CHEBI:167618"/>
    </reaction>
    <physiologicalReaction direction="left-to-right" evidence="1">
        <dbReference type="Rhea" id="RHEA:78684"/>
    </physiologicalReaction>
</comment>
<comment type="catalytic activity">
    <reaction evidence="1">
        <text>a 5'-end NAD(+)-phospho-ribonucleoside in mRNA + H2O = a 5'-end phospho-ribonucleoside in mRNA + NAD(+) + H(+)</text>
        <dbReference type="Rhea" id="RHEA:60880"/>
        <dbReference type="Rhea" id="RHEA-COMP:15692"/>
        <dbReference type="Rhea" id="RHEA-COMP:15698"/>
        <dbReference type="ChEBI" id="CHEBI:15377"/>
        <dbReference type="ChEBI" id="CHEBI:15378"/>
        <dbReference type="ChEBI" id="CHEBI:57540"/>
        <dbReference type="ChEBI" id="CHEBI:138282"/>
        <dbReference type="ChEBI" id="CHEBI:144029"/>
    </reaction>
    <physiologicalReaction direction="left-to-right" evidence="1">
        <dbReference type="Rhea" id="RHEA:60881"/>
    </physiologicalReaction>
</comment>
<comment type="catalytic activity">
    <reaction evidence="1">
        <text>a 5'-end NAD(+)-phospho-ribonucleoside in snoRNA + H2O = a 5'-end phospho-ribonucleoside in snoRNA + NAD(+) + H(+)</text>
        <dbReference type="Rhea" id="RHEA:60892"/>
        <dbReference type="Rhea" id="RHEA-COMP:15699"/>
        <dbReference type="Rhea" id="RHEA-COMP:15700"/>
        <dbReference type="ChEBI" id="CHEBI:15377"/>
        <dbReference type="ChEBI" id="CHEBI:15378"/>
        <dbReference type="ChEBI" id="CHEBI:57540"/>
        <dbReference type="ChEBI" id="CHEBI:138282"/>
        <dbReference type="ChEBI" id="CHEBI:144029"/>
    </reaction>
    <physiologicalReaction direction="left-to-right" evidence="1">
        <dbReference type="Rhea" id="RHEA:60893"/>
    </physiologicalReaction>
</comment>
<comment type="catalytic activity">
    <reaction evidence="1">
        <text>a 5'-end (N(7)-methyl 5'-triphosphoguanosine)-ribonucleoside-ribonucleotide in mRNA + H2O = a (N(7)-methyl 5'-triphosphoguanosine)-nucleoside + a 5'-end phospho-ribonucleoside in mRNA + H(+)</text>
        <dbReference type="Rhea" id="RHEA:66928"/>
        <dbReference type="Rhea" id="RHEA-COMP:15692"/>
        <dbReference type="Rhea" id="RHEA-COMP:17313"/>
        <dbReference type="ChEBI" id="CHEBI:15377"/>
        <dbReference type="ChEBI" id="CHEBI:15378"/>
        <dbReference type="ChEBI" id="CHEBI:138282"/>
        <dbReference type="ChEBI" id="CHEBI:172876"/>
        <dbReference type="ChEBI" id="CHEBI:172877"/>
    </reaction>
    <physiologicalReaction direction="left-to-right" evidence="1">
        <dbReference type="Rhea" id="RHEA:66929"/>
    </physiologicalReaction>
</comment>
<comment type="catalytic activity">
    <reaction evidence="1">
        <text>a 5'-end FAD-phospho-ribonucleoside in mRNA + H2O = a 5'-end phospho-ribonucleoside in mRNA + FAD + H(+)</text>
        <dbReference type="Rhea" id="RHEA:67492"/>
        <dbReference type="Rhea" id="RHEA-COMP:15692"/>
        <dbReference type="Rhea" id="RHEA-COMP:17275"/>
        <dbReference type="ChEBI" id="CHEBI:15377"/>
        <dbReference type="ChEBI" id="CHEBI:15378"/>
        <dbReference type="ChEBI" id="CHEBI:57692"/>
        <dbReference type="ChEBI" id="CHEBI:138282"/>
        <dbReference type="ChEBI" id="CHEBI:172372"/>
    </reaction>
    <physiologicalReaction direction="left-to-right" evidence="1">
        <dbReference type="Rhea" id="RHEA:67493"/>
    </physiologicalReaction>
</comment>
<comment type="catalytic activity">
    <reaction evidence="1">
        <text>a 5'-end CoA-ribonucleoside in mRNA + H2O = 3'-dephospho-CoA + a 5'-end phospho-ribonucleoside in mRNA + H(+)</text>
        <dbReference type="Rhea" id="RHEA:67496"/>
        <dbReference type="Rhea" id="RHEA-COMP:15692"/>
        <dbReference type="Rhea" id="RHEA-COMP:17276"/>
        <dbReference type="ChEBI" id="CHEBI:15377"/>
        <dbReference type="ChEBI" id="CHEBI:15378"/>
        <dbReference type="ChEBI" id="CHEBI:57328"/>
        <dbReference type="ChEBI" id="CHEBI:138282"/>
        <dbReference type="ChEBI" id="CHEBI:172371"/>
    </reaction>
    <physiologicalReaction direction="left-to-right" evidence="1">
        <dbReference type="Rhea" id="RHEA:67497"/>
    </physiologicalReaction>
</comment>
<comment type="cofactor">
    <cofactor evidence="1">
        <name>Mg(2+)</name>
        <dbReference type="ChEBI" id="CHEBI:18420"/>
    </cofactor>
    <text evidence="1">Binds 2 magnesium ions.</text>
</comment>
<comment type="subcellular location">
    <subcellularLocation>
        <location evidence="2">Nucleus</location>
    </subcellularLocation>
</comment>
<comment type="similarity">
    <text evidence="3">Belongs to the DXO/Dom3Z family.</text>
</comment>
<organism>
    <name type="scientific">Rattus norvegicus</name>
    <name type="common">Rat</name>
    <dbReference type="NCBI Taxonomy" id="10116"/>
    <lineage>
        <taxon>Eukaryota</taxon>
        <taxon>Metazoa</taxon>
        <taxon>Chordata</taxon>
        <taxon>Craniata</taxon>
        <taxon>Vertebrata</taxon>
        <taxon>Euteleostomi</taxon>
        <taxon>Mammalia</taxon>
        <taxon>Eutheria</taxon>
        <taxon>Euarchontoglires</taxon>
        <taxon>Glires</taxon>
        <taxon>Rodentia</taxon>
        <taxon>Myomorpha</taxon>
        <taxon>Muroidea</taxon>
        <taxon>Muridae</taxon>
        <taxon>Murinae</taxon>
        <taxon>Rattus</taxon>
    </lineage>
</organism>
<proteinExistence type="evidence at protein level"/>
<feature type="chain" id="PRO_0000249824" description="Decapping and exoribonuclease protein">
    <location>
        <begin position="1"/>
        <end position="397"/>
    </location>
</feature>
<feature type="binding site" evidence="1">
    <location>
        <position position="58"/>
    </location>
    <ligand>
        <name>substrate</name>
    </ligand>
</feature>
<feature type="binding site" evidence="1">
    <location>
        <position position="101"/>
    </location>
    <ligand>
        <name>substrate</name>
    </ligand>
</feature>
<feature type="binding site" evidence="1">
    <location>
        <begin position="131"/>
        <end position="133"/>
    </location>
    <ligand>
        <name>substrate</name>
    </ligand>
</feature>
<feature type="binding site" evidence="1">
    <location>
        <position position="192"/>
    </location>
    <ligand>
        <name>Mg(2+)</name>
        <dbReference type="ChEBI" id="CHEBI:18420"/>
        <label>1</label>
    </ligand>
</feature>
<feature type="binding site" evidence="1">
    <location>
        <position position="192"/>
    </location>
    <ligand>
        <name>Mg(2+)</name>
        <dbReference type="ChEBI" id="CHEBI:18420"/>
        <label>2</label>
    </ligand>
</feature>
<feature type="binding site" evidence="1">
    <location>
        <position position="217"/>
    </location>
    <ligand>
        <name>substrate</name>
    </ligand>
</feature>
<feature type="binding site" evidence="1">
    <location>
        <position position="234"/>
    </location>
    <ligand>
        <name>Mg(2+)</name>
        <dbReference type="ChEBI" id="CHEBI:18420"/>
        <label>2</label>
    </ligand>
</feature>
<feature type="binding site" evidence="1">
    <location>
        <position position="234"/>
    </location>
    <ligand>
        <name>substrate</name>
    </ligand>
</feature>
<feature type="binding site" evidence="1">
    <location>
        <position position="236"/>
    </location>
    <ligand>
        <name>Mg(2+)</name>
        <dbReference type="ChEBI" id="CHEBI:18420"/>
        <label>1</label>
    </ligand>
</feature>
<feature type="binding site" evidence="1">
    <location>
        <position position="236"/>
    </location>
    <ligand>
        <name>Mg(2+)</name>
        <dbReference type="ChEBI" id="CHEBI:18420"/>
        <label>2</label>
    </ligand>
</feature>
<feature type="binding site" evidence="1">
    <location>
        <position position="253"/>
    </location>
    <ligand>
        <name>Mg(2+)</name>
        <dbReference type="ChEBI" id="CHEBI:18420"/>
        <label>1</label>
    </ligand>
</feature>
<feature type="binding site" evidence="1">
    <location>
        <position position="254"/>
    </location>
    <ligand>
        <name>Mg(2+)</name>
        <dbReference type="ChEBI" id="CHEBI:18420"/>
        <label>1</label>
    </ligand>
</feature>
<feature type="binding site" evidence="1">
    <location>
        <position position="255"/>
    </location>
    <ligand>
        <name>substrate</name>
    </ligand>
</feature>
<feature type="binding site" evidence="1">
    <location>
        <position position="280"/>
    </location>
    <ligand>
        <name>substrate</name>
    </ligand>
</feature>
<feature type="modified residue" description="Phosphothreonine" evidence="5">
    <location>
        <position position="392"/>
    </location>
</feature>
<feature type="modified residue" description="Phosphoserine" evidence="5">
    <location>
        <position position="394"/>
    </location>
</feature>
<protein>
    <recommendedName>
        <fullName evidence="2">Decapping and exoribonuclease protein</fullName>
        <shortName evidence="2">DXO</shortName>
        <ecNumber evidence="1">3.6.1.-</ecNumber>
    </recommendedName>
    <alternativeName>
        <fullName evidence="3">5'-3' exoribonuclease DXO</fullName>
        <ecNumber evidence="1">3.1.13.-</ecNumber>
    </alternativeName>
    <alternativeName>
        <fullName evidence="2">Dom-3 homolog Z</fullName>
    </alternativeName>
    <alternativeName>
        <fullName evidence="3">NAD-capped RNA hydrolase DXO</fullName>
        <shortName evidence="3">DeNADding enzyme DXO</shortName>
        <ecNumber evidence="1">3.6.1.-</ecNumber>
    </alternativeName>
</protein>
<sequence>MEPRGTKRKAEKTEVAKTWNKLPRSLPSLRTQPSLYSGPFPFYRRPSELGCFSLDAQRQYHGDARALRYYSPPPINGPGPDFDLRDGYPDRYQPRDEEVRERLDHLLRWVLEHRNQLEGGPGWLAGATVTWRGHLTKLLTTPYERQEGWQLAASRFQGTLYLSEVETPAARAQRLARPPLLRELMYMGYKFEQYMCADKPGGSPDPSGEVNTNVAFCSVLRSRLGNHPLLFSGEVDCLNPQAPCTQPPSCYVELKTSKEMHSPGQWRSFYRHKLLKWWAQSFLPGVPYVVAGFRNPEGFVCSLKTFPTMEMFENVRNDQEGWNPSVCMNFCAAFLSFAQSTVVQDDPRLVHLFSWEPGGPVTVSVHRDAPYAFLPSWYVEAMTQDLPSLSKTPSPKD</sequence>
<reference key="1">
    <citation type="journal article" date="2004" name="Genome Res.">
        <title>The genomic sequence and comparative analysis of the rat major histocompatibility complex.</title>
        <authorList>
            <person name="Hurt P."/>
            <person name="Walter L."/>
            <person name="Sudbrak R."/>
            <person name="Klages S."/>
            <person name="Mueller I."/>
            <person name="Shiina T."/>
            <person name="Inoko H."/>
            <person name="Lehrach H."/>
            <person name="Guenther E."/>
            <person name="Reinhardt R."/>
            <person name="Himmelbauer H."/>
        </authorList>
    </citation>
    <scope>NUCLEOTIDE SEQUENCE [LARGE SCALE GENOMIC DNA]</scope>
    <source>
        <strain>Brown Norway</strain>
    </source>
</reference>
<reference key="2">
    <citation type="journal article" date="2004" name="Genome Res.">
        <title>The status, quality, and expansion of the NIH full-length cDNA project: the Mammalian Gene Collection (MGC).</title>
        <authorList>
            <consortium name="The MGC Project Team"/>
        </authorList>
    </citation>
    <scope>NUCLEOTIDE SEQUENCE [LARGE SCALE MRNA]</scope>
    <source>
        <tissue>Testis</tissue>
    </source>
</reference>
<reference key="3">
    <citation type="journal article" date="2012" name="Nat. Commun.">
        <title>Quantitative maps of protein phosphorylation sites across 14 different rat organs and tissues.</title>
        <authorList>
            <person name="Lundby A."/>
            <person name="Secher A."/>
            <person name="Lage K."/>
            <person name="Nordsborg N.B."/>
            <person name="Dmytriyev A."/>
            <person name="Lundby C."/>
            <person name="Olsen J.V."/>
        </authorList>
    </citation>
    <scope>PHOSPHORYLATION [LARGE SCALE ANALYSIS] AT THR-392 AND SER-394</scope>
    <scope>IDENTIFICATION BY MASS SPECTROMETRY [LARGE SCALE ANALYSIS]</scope>
</reference>
<name>DXO_RAT</name>
<accession>Q6MG77</accession>
<evidence type="ECO:0000250" key="1">
    <source>
        <dbReference type="UniProtKB" id="O70348"/>
    </source>
</evidence>
<evidence type="ECO:0000250" key="2">
    <source>
        <dbReference type="UniProtKB" id="O77932"/>
    </source>
</evidence>
<evidence type="ECO:0000305" key="3"/>
<evidence type="ECO:0000312" key="4">
    <source>
        <dbReference type="RGD" id="1303267"/>
    </source>
</evidence>
<evidence type="ECO:0007744" key="5">
    <source>
    </source>
</evidence>
<gene>
    <name evidence="4" type="primary">Dxo</name>
    <name evidence="2" type="synonym">Dom3z</name>
</gene>